<feature type="chain" id="PRO_0000443843" description="2-oxoglutarate-dependent dioxygenase ecdK">
    <location>
        <begin position="1"/>
        <end position="332"/>
    </location>
</feature>
<feature type="domain" description="Fe2OG dioxygenase" evidence="1">
    <location>
        <begin position="178"/>
        <end position="294"/>
    </location>
</feature>
<feature type="binding site" evidence="1">
    <location>
        <position position="206"/>
    </location>
    <ligand>
        <name>Fe cation</name>
        <dbReference type="ChEBI" id="CHEBI:24875"/>
    </ligand>
</feature>
<feature type="binding site" evidence="1">
    <location>
        <position position="208"/>
    </location>
    <ligand>
        <name>Fe cation</name>
        <dbReference type="ChEBI" id="CHEBI:24875"/>
    </ligand>
</feature>
<feature type="binding site" evidence="1">
    <location>
        <position position="266"/>
    </location>
    <ligand>
        <name>Fe cation</name>
        <dbReference type="ChEBI" id="CHEBI:24875"/>
    </ligand>
</feature>
<feature type="binding site" evidence="1">
    <location>
        <position position="285"/>
    </location>
    <ligand>
        <name>2-oxoglutarate</name>
        <dbReference type="ChEBI" id="CHEBI:16810"/>
    </ligand>
</feature>
<comment type="function">
    <text evidence="2">2-oxoglutarate-dependent dioxygenase; part of the gene cluster that mediates the biosynthesis of echinocandin B, a fungal lipidated cyclic hexapeptide that acts as an antifungal agent (PubMed:22998630). Linoleoyl-AMP, produced by the fatty-acyl-AMP ligase ecdI, is transferred to the initiation carrier domain (T0) of ecdA (PubMed:22998630). The linoleoyl-S-phosphopantetheinyl-T0 is sequentially extended with L-ornithine, L-threonine, L-proline, L-homotyrosine, L-threonine, and 4R-methyl-L-proline to form the linear hexapeptide (PubMed:22998630). Thereafter, the terminal condensation (C7) performs macrocyclization of the NRPS product and the cyclic scaffold is released from ecdA (PubMed:22998630). All six of the amino acid residues are hydroxylated, including 4R,5R-dihydroxy-L-ornithine, 4R-hydroxyl-L-proline, 3S,4S-dihydroxy-L-homotyrosine, and 3S-hydroxyl-4S-methyl-L-prolin (PubMed:22998630). In the pathway, all the hydroxylation reactions are proposed to occur following completion of the cyclic peptide, so the unhydroxylated precursor produced by ecdA will undergo six rounds of hydroxylation (PubMed:22998630). Five hydroxylase genes (ecdG, ecdH, ecdK, htyE and htyF) are embedded within the echinocandin B (ecd) and L-homotyrosine (hty) clusters (PubMed:22998630).</text>
</comment>
<comment type="cofactor">
    <cofactor evidence="1">
        <name>Fe(2+)</name>
        <dbReference type="ChEBI" id="CHEBI:29033"/>
    </cofactor>
    <text evidence="1">Binds 1 Fe(2+) ion per subunit.</text>
</comment>
<comment type="pathway">
    <text evidence="5">Antifungal biosynthesis.</text>
</comment>
<comment type="biotechnology">
    <text evidence="2">Due to their effectiveness as antifungal agents, echinocandin derivatives can be used for the treatment of human invasive candidiasis (PubMed:22998630).</text>
</comment>
<comment type="similarity">
    <text evidence="4">Belongs to the iron/ascorbate-dependent oxidoreductase family.</text>
</comment>
<organism>
    <name type="scientific">Aspergillus rugulosus</name>
    <name type="common">Emericella rugulosa</name>
    <dbReference type="NCBI Taxonomy" id="41736"/>
    <lineage>
        <taxon>Eukaryota</taxon>
        <taxon>Fungi</taxon>
        <taxon>Dikarya</taxon>
        <taxon>Ascomycota</taxon>
        <taxon>Pezizomycotina</taxon>
        <taxon>Eurotiomycetes</taxon>
        <taxon>Eurotiomycetidae</taxon>
        <taxon>Eurotiales</taxon>
        <taxon>Aspergillaceae</taxon>
        <taxon>Aspergillus</taxon>
        <taxon>Aspergillus subgen. Nidulantes</taxon>
    </lineage>
</organism>
<reference key="1">
    <citation type="journal article" date="2012" name="J. Am. Chem. Soc.">
        <title>Identification and characterization of the echinocandin B biosynthetic gene cluster from Emericella rugulosa NRRL 11440.</title>
        <authorList>
            <person name="Cacho R.A."/>
            <person name="Jiang W."/>
            <person name="Chooi Y.H."/>
            <person name="Walsh C.T."/>
            <person name="Tang Y."/>
        </authorList>
    </citation>
    <scope>NUCLEOTIDE SEQUENCE [GENOMIC DNA]</scope>
    <scope>FUNCTION</scope>
    <scope>PATHWAY</scope>
    <scope>BIOTECHNOLOGY</scope>
    <source>
        <strain>ATCC 58397 / NRRL 11440</strain>
    </source>
</reference>
<dbReference type="EC" id="1.14.-.-" evidence="5"/>
<dbReference type="EMBL" id="JX421684">
    <property type="protein sequence ID" value="AFT91382.1"/>
    <property type="molecule type" value="Genomic_DNA"/>
</dbReference>
<dbReference type="SMR" id="K0E3U5"/>
<dbReference type="BioCyc" id="MetaCyc:MONOMER-19240"/>
<dbReference type="GO" id="GO:0051213">
    <property type="term" value="F:dioxygenase activity"/>
    <property type="evidence" value="ECO:0007669"/>
    <property type="project" value="UniProtKB-KW"/>
</dbReference>
<dbReference type="GO" id="GO:0046872">
    <property type="term" value="F:metal ion binding"/>
    <property type="evidence" value="ECO:0007669"/>
    <property type="project" value="UniProtKB-KW"/>
</dbReference>
<dbReference type="GO" id="GO:0044283">
    <property type="term" value="P:small molecule biosynthetic process"/>
    <property type="evidence" value="ECO:0007669"/>
    <property type="project" value="UniProtKB-ARBA"/>
</dbReference>
<dbReference type="Gene3D" id="2.60.120.330">
    <property type="entry name" value="B-lactam Antibiotic, Isopenicillin N Synthase, Chain"/>
    <property type="match status" value="1"/>
</dbReference>
<dbReference type="InterPro" id="IPR026992">
    <property type="entry name" value="DIOX_N"/>
</dbReference>
<dbReference type="InterPro" id="IPR044861">
    <property type="entry name" value="IPNS-like_FE2OG_OXY"/>
</dbReference>
<dbReference type="InterPro" id="IPR027443">
    <property type="entry name" value="IPNS-like_sf"/>
</dbReference>
<dbReference type="InterPro" id="IPR050231">
    <property type="entry name" value="Iron_ascorbate_oxido_reductase"/>
</dbReference>
<dbReference type="InterPro" id="IPR005123">
    <property type="entry name" value="Oxoglu/Fe-dep_dioxygenase_dom"/>
</dbReference>
<dbReference type="PANTHER" id="PTHR47990">
    <property type="entry name" value="2-OXOGLUTARATE (2OG) AND FE(II)-DEPENDENT OXYGENASE SUPERFAMILY PROTEIN-RELATED"/>
    <property type="match status" value="1"/>
</dbReference>
<dbReference type="Pfam" id="PF03171">
    <property type="entry name" value="2OG-FeII_Oxy"/>
    <property type="match status" value="1"/>
</dbReference>
<dbReference type="Pfam" id="PF14226">
    <property type="entry name" value="DIOX_N"/>
    <property type="match status" value="1"/>
</dbReference>
<dbReference type="PRINTS" id="PR00682">
    <property type="entry name" value="IPNSYNTHASE"/>
</dbReference>
<dbReference type="SUPFAM" id="SSF51197">
    <property type="entry name" value="Clavaminate synthase-like"/>
    <property type="match status" value="1"/>
</dbReference>
<dbReference type="PROSITE" id="PS51471">
    <property type="entry name" value="FE2OG_OXY"/>
    <property type="match status" value="1"/>
</dbReference>
<accession>K0E3U5</accession>
<sequence>MSVLTLDFTKFHSGSEVERRAFGQALLDGFTTTGFVKLINHGFSKEEMADIFNWNQRFFDLPIDRKAAIRNDEGPKPQRGWSSLGAEKTGFLNPGGKLSLARASNNDRQDAKEHFDIGPAEDEEFQNKWPEEQTLPGFQETMNSYFDRSQAITLELLEALALAMDVPKDTFVGLCHGHASELRLNHYPSIPVKTIEEGKTNRIWPHTDFGIITLLAQDDIGGLEIQDRNHPSDFLPVNREDSTEFVVNIGDILERWTNGRLRAGLHQVTTPRSMQQKGNGTLPTRRSVAFFLKPHRQMSVASISHFVPGNQSPRYEDMTALAYQQLRTGIVY</sequence>
<keyword id="KW-0223">Dioxygenase</keyword>
<keyword id="KW-0408">Iron</keyword>
<keyword id="KW-0479">Metal-binding</keyword>
<keyword id="KW-0560">Oxidoreductase</keyword>
<name>ECDK_ASPRU</name>
<protein>
    <recommendedName>
        <fullName evidence="3">2-oxoglutarate-dependent dioxygenase ecdK</fullName>
        <ecNumber evidence="5">1.14.-.-</ecNumber>
    </recommendedName>
    <alternativeName>
        <fullName evidence="3">Echinocandin B biosynthetic cluster protein K</fullName>
    </alternativeName>
</protein>
<proteinExistence type="evidence at protein level"/>
<evidence type="ECO:0000255" key="1">
    <source>
        <dbReference type="PROSITE-ProRule" id="PRU00805"/>
    </source>
</evidence>
<evidence type="ECO:0000269" key="2">
    <source>
    </source>
</evidence>
<evidence type="ECO:0000303" key="3">
    <source>
    </source>
</evidence>
<evidence type="ECO:0000305" key="4"/>
<evidence type="ECO:0000305" key="5">
    <source>
    </source>
</evidence>
<gene>
    <name evidence="3" type="primary">ecdK</name>
</gene>